<proteinExistence type="inferred from homology"/>
<feature type="chain" id="PRO_0000188077" description="Acyl-[acyl-carrier-protein]--UDP-N-acetylglucosamine O-acyltransferase">
    <location>
        <begin position="1"/>
        <end position="263"/>
    </location>
</feature>
<comment type="function">
    <text evidence="1">Involved in the biosynthesis of lipid A, a phosphorylated glycolipid that anchors the lipopolysaccharide to the outer membrane of the cell.</text>
</comment>
<comment type="catalytic activity">
    <reaction evidence="1">
        <text>a (3R)-hydroxyacyl-[ACP] + UDP-N-acetyl-alpha-D-glucosamine = a UDP-3-O-[(3R)-3-hydroxyacyl]-N-acetyl-alpha-D-glucosamine + holo-[ACP]</text>
        <dbReference type="Rhea" id="RHEA:67812"/>
        <dbReference type="Rhea" id="RHEA-COMP:9685"/>
        <dbReference type="Rhea" id="RHEA-COMP:9945"/>
        <dbReference type="ChEBI" id="CHEBI:57705"/>
        <dbReference type="ChEBI" id="CHEBI:64479"/>
        <dbReference type="ChEBI" id="CHEBI:78827"/>
        <dbReference type="ChEBI" id="CHEBI:173225"/>
        <dbReference type="EC" id="2.3.1.129"/>
    </reaction>
</comment>
<comment type="pathway">
    <text evidence="1">Glycolipid biosynthesis; lipid IV(A) biosynthesis; lipid IV(A) from (3R)-3-hydroxytetradecanoyl-[acyl-carrier-protein] and UDP-N-acetyl-alpha-D-glucosamine: step 1/6.</text>
</comment>
<comment type="subunit">
    <text evidence="1">Homotrimer.</text>
</comment>
<comment type="subcellular location">
    <subcellularLocation>
        <location evidence="1">Cytoplasm</location>
    </subcellularLocation>
</comment>
<comment type="similarity">
    <text evidence="1">Belongs to the transferase hexapeptide repeat family. LpxA subfamily.</text>
</comment>
<name>LPXA_XANCP</name>
<accession>Q8PAW5</accession>
<evidence type="ECO:0000255" key="1">
    <source>
        <dbReference type="HAMAP-Rule" id="MF_00387"/>
    </source>
</evidence>
<protein>
    <recommendedName>
        <fullName evidence="1">Acyl-[acyl-carrier-protein]--UDP-N-acetylglucosamine O-acyltransferase</fullName>
        <shortName evidence="1">UDP-N-acetylglucosamine acyltransferase</shortName>
        <ecNumber evidence="1">2.3.1.129</ecNumber>
    </recommendedName>
</protein>
<gene>
    <name evidence="1" type="primary">lpxA</name>
    <name type="ordered locus">XCC1361</name>
</gene>
<dbReference type="EC" id="2.3.1.129" evidence="1"/>
<dbReference type="EMBL" id="AE008922">
    <property type="protein sequence ID" value="AAM40659.1"/>
    <property type="molecule type" value="Genomic_DNA"/>
</dbReference>
<dbReference type="RefSeq" id="NP_636735.1">
    <property type="nucleotide sequence ID" value="NC_003902.1"/>
</dbReference>
<dbReference type="RefSeq" id="WP_011036553.1">
    <property type="nucleotide sequence ID" value="NC_003902.1"/>
</dbReference>
<dbReference type="SMR" id="Q8PAW5"/>
<dbReference type="STRING" id="190485.XCC1361"/>
<dbReference type="EnsemblBacteria" id="AAM40659">
    <property type="protein sequence ID" value="AAM40659"/>
    <property type="gene ID" value="XCC1361"/>
</dbReference>
<dbReference type="GeneID" id="58014041"/>
<dbReference type="KEGG" id="xcc:XCC1361"/>
<dbReference type="PATRIC" id="fig|190485.4.peg.1463"/>
<dbReference type="eggNOG" id="COG1043">
    <property type="taxonomic scope" value="Bacteria"/>
</dbReference>
<dbReference type="HOGENOM" id="CLU_061249_0_0_6"/>
<dbReference type="OrthoDB" id="9807278at2"/>
<dbReference type="UniPathway" id="UPA00359">
    <property type="reaction ID" value="UER00477"/>
</dbReference>
<dbReference type="Proteomes" id="UP000001010">
    <property type="component" value="Chromosome"/>
</dbReference>
<dbReference type="GO" id="GO:0005737">
    <property type="term" value="C:cytoplasm"/>
    <property type="evidence" value="ECO:0007669"/>
    <property type="project" value="UniProtKB-SubCell"/>
</dbReference>
<dbReference type="GO" id="GO:0016020">
    <property type="term" value="C:membrane"/>
    <property type="evidence" value="ECO:0007669"/>
    <property type="project" value="GOC"/>
</dbReference>
<dbReference type="GO" id="GO:0008780">
    <property type="term" value="F:acyl-[acyl-carrier-protein]-UDP-N-acetylglucosamine O-acyltransferase activity"/>
    <property type="evidence" value="ECO:0007669"/>
    <property type="project" value="UniProtKB-UniRule"/>
</dbReference>
<dbReference type="GO" id="GO:0009245">
    <property type="term" value="P:lipid A biosynthetic process"/>
    <property type="evidence" value="ECO:0007669"/>
    <property type="project" value="UniProtKB-UniRule"/>
</dbReference>
<dbReference type="CDD" id="cd03351">
    <property type="entry name" value="LbH_UDP-GlcNAc_AT"/>
    <property type="match status" value="1"/>
</dbReference>
<dbReference type="Gene3D" id="2.160.10.10">
    <property type="entry name" value="Hexapeptide repeat proteins"/>
    <property type="match status" value="1"/>
</dbReference>
<dbReference type="Gene3D" id="1.20.1180.10">
    <property type="entry name" value="Udp N-acetylglucosamine O-acyltransferase, C-terminal domain"/>
    <property type="match status" value="1"/>
</dbReference>
<dbReference type="HAMAP" id="MF_00387">
    <property type="entry name" value="LpxA"/>
    <property type="match status" value="1"/>
</dbReference>
<dbReference type="InterPro" id="IPR029098">
    <property type="entry name" value="Acetyltransf_C"/>
</dbReference>
<dbReference type="InterPro" id="IPR037157">
    <property type="entry name" value="Acetyltransf_C_sf"/>
</dbReference>
<dbReference type="InterPro" id="IPR001451">
    <property type="entry name" value="Hexapep"/>
</dbReference>
<dbReference type="InterPro" id="IPR010137">
    <property type="entry name" value="Lipid_A_LpxA"/>
</dbReference>
<dbReference type="InterPro" id="IPR011004">
    <property type="entry name" value="Trimer_LpxA-like_sf"/>
</dbReference>
<dbReference type="NCBIfam" id="TIGR01852">
    <property type="entry name" value="lipid_A_lpxA"/>
    <property type="match status" value="1"/>
</dbReference>
<dbReference type="NCBIfam" id="NF003657">
    <property type="entry name" value="PRK05289.1"/>
    <property type="match status" value="1"/>
</dbReference>
<dbReference type="PANTHER" id="PTHR43480">
    <property type="entry name" value="ACYL-[ACYL-CARRIER-PROTEIN]--UDP-N-ACETYLGLUCOSAMINE O-ACYLTRANSFERASE"/>
    <property type="match status" value="1"/>
</dbReference>
<dbReference type="PANTHER" id="PTHR43480:SF1">
    <property type="entry name" value="ACYL-[ACYL-CARRIER-PROTEIN]--UDP-N-ACETYLGLUCOSAMINE O-ACYLTRANSFERASE, MITOCHONDRIAL-RELATED"/>
    <property type="match status" value="1"/>
</dbReference>
<dbReference type="Pfam" id="PF13720">
    <property type="entry name" value="Acetyltransf_11"/>
    <property type="match status" value="1"/>
</dbReference>
<dbReference type="Pfam" id="PF00132">
    <property type="entry name" value="Hexapep"/>
    <property type="match status" value="1"/>
</dbReference>
<dbReference type="PIRSF" id="PIRSF000456">
    <property type="entry name" value="UDP-GlcNAc_acltr"/>
    <property type="match status" value="1"/>
</dbReference>
<dbReference type="SUPFAM" id="SSF51161">
    <property type="entry name" value="Trimeric LpxA-like enzymes"/>
    <property type="match status" value="1"/>
</dbReference>
<sequence length="263" mass="27842">MRDQAPLIHPTAVIDPAARLASDVRVGAFSLIGADVEIGAGTEVGPHCSIHGPTRIGSNNRFIGHAAIGGEPQDKKYAGERTELVIGNGNVIREFVTINRGTGGGGGITVVGDDNWMLAYTHVAHDCHVGNHCVFSNNTTLAGHVTVGDYVIISGFAGAHQFCRIGAHAFLGMGALTNGDVPPFTMVGSDSLGRPRGINSEGLKRRGFDAERISAIKRAYRTLYVAGLPLAEAKLQLAEQARDSDDVRGLLEFIEAAERPLLR</sequence>
<keyword id="KW-0012">Acyltransferase</keyword>
<keyword id="KW-0963">Cytoplasm</keyword>
<keyword id="KW-0441">Lipid A biosynthesis</keyword>
<keyword id="KW-0444">Lipid biosynthesis</keyword>
<keyword id="KW-0443">Lipid metabolism</keyword>
<keyword id="KW-1185">Reference proteome</keyword>
<keyword id="KW-0677">Repeat</keyword>
<keyword id="KW-0808">Transferase</keyword>
<reference key="1">
    <citation type="journal article" date="2002" name="Nature">
        <title>Comparison of the genomes of two Xanthomonas pathogens with differing host specificities.</title>
        <authorList>
            <person name="da Silva A.C.R."/>
            <person name="Ferro J.A."/>
            <person name="Reinach F.C."/>
            <person name="Farah C.S."/>
            <person name="Furlan L.R."/>
            <person name="Quaggio R.B."/>
            <person name="Monteiro-Vitorello C.B."/>
            <person name="Van Sluys M.A."/>
            <person name="Almeida N.F. Jr."/>
            <person name="Alves L.M.C."/>
            <person name="do Amaral A.M."/>
            <person name="Bertolini M.C."/>
            <person name="Camargo L.E.A."/>
            <person name="Camarotte G."/>
            <person name="Cannavan F."/>
            <person name="Cardozo J."/>
            <person name="Chambergo F."/>
            <person name="Ciapina L.P."/>
            <person name="Cicarelli R.M.B."/>
            <person name="Coutinho L.L."/>
            <person name="Cursino-Santos J.R."/>
            <person name="El-Dorry H."/>
            <person name="Faria J.B."/>
            <person name="Ferreira A.J.S."/>
            <person name="Ferreira R.C.C."/>
            <person name="Ferro M.I.T."/>
            <person name="Formighieri E.F."/>
            <person name="Franco M.C."/>
            <person name="Greggio C.C."/>
            <person name="Gruber A."/>
            <person name="Katsuyama A.M."/>
            <person name="Kishi L.T."/>
            <person name="Leite R.P."/>
            <person name="Lemos E.G.M."/>
            <person name="Lemos M.V.F."/>
            <person name="Locali E.C."/>
            <person name="Machado M.A."/>
            <person name="Madeira A.M.B.N."/>
            <person name="Martinez-Rossi N.M."/>
            <person name="Martins E.C."/>
            <person name="Meidanis J."/>
            <person name="Menck C.F.M."/>
            <person name="Miyaki C.Y."/>
            <person name="Moon D.H."/>
            <person name="Moreira L.M."/>
            <person name="Novo M.T.M."/>
            <person name="Okura V.K."/>
            <person name="Oliveira M.C."/>
            <person name="Oliveira V.R."/>
            <person name="Pereira H.A."/>
            <person name="Rossi A."/>
            <person name="Sena J.A.D."/>
            <person name="Silva C."/>
            <person name="de Souza R.F."/>
            <person name="Spinola L.A.F."/>
            <person name="Takita M.A."/>
            <person name="Tamura R.E."/>
            <person name="Teixeira E.C."/>
            <person name="Tezza R.I.D."/>
            <person name="Trindade dos Santos M."/>
            <person name="Truffi D."/>
            <person name="Tsai S.M."/>
            <person name="White F.F."/>
            <person name="Setubal J.C."/>
            <person name="Kitajima J.P."/>
        </authorList>
    </citation>
    <scope>NUCLEOTIDE SEQUENCE [LARGE SCALE GENOMIC DNA]</scope>
    <source>
        <strain>ATCC 33913 / DSM 3586 / NCPPB 528 / LMG 568 / P 25</strain>
    </source>
</reference>
<organism>
    <name type="scientific">Xanthomonas campestris pv. campestris (strain ATCC 33913 / DSM 3586 / NCPPB 528 / LMG 568 / P 25)</name>
    <dbReference type="NCBI Taxonomy" id="190485"/>
    <lineage>
        <taxon>Bacteria</taxon>
        <taxon>Pseudomonadati</taxon>
        <taxon>Pseudomonadota</taxon>
        <taxon>Gammaproteobacteria</taxon>
        <taxon>Lysobacterales</taxon>
        <taxon>Lysobacteraceae</taxon>
        <taxon>Xanthomonas</taxon>
    </lineage>
</organism>